<accession>Q0VS00</accession>
<dbReference type="EC" id="6.3.2.4" evidence="2"/>
<dbReference type="EMBL" id="AM286690">
    <property type="protein sequence ID" value="CAL16048.1"/>
    <property type="molecule type" value="Genomic_DNA"/>
</dbReference>
<dbReference type="RefSeq" id="WP_011587886.1">
    <property type="nucleotide sequence ID" value="NC_008260.1"/>
</dbReference>
<dbReference type="SMR" id="Q0VS00"/>
<dbReference type="STRING" id="393595.ABO_0600"/>
<dbReference type="KEGG" id="abo:ABO_0600"/>
<dbReference type="eggNOG" id="COG1181">
    <property type="taxonomic scope" value="Bacteria"/>
</dbReference>
<dbReference type="HOGENOM" id="CLU_039268_1_2_6"/>
<dbReference type="OrthoDB" id="9813261at2"/>
<dbReference type="UniPathway" id="UPA00219"/>
<dbReference type="Proteomes" id="UP000008871">
    <property type="component" value="Chromosome"/>
</dbReference>
<dbReference type="GO" id="GO:0005829">
    <property type="term" value="C:cytosol"/>
    <property type="evidence" value="ECO:0007669"/>
    <property type="project" value="TreeGrafter"/>
</dbReference>
<dbReference type="GO" id="GO:0005524">
    <property type="term" value="F:ATP binding"/>
    <property type="evidence" value="ECO:0007669"/>
    <property type="project" value="UniProtKB-KW"/>
</dbReference>
<dbReference type="GO" id="GO:0008716">
    <property type="term" value="F:D-alanine-D-alanine ligase activity"/>
    <property type="evidence" value="ECO:0007669"/>
    <property type="project" value="UniProtKB-UniRule"/>
</dbReference>
<dbReference type="GO" id="GO:0046872">
    <property type="term" value="F:metal ion binding"/>
    <property type="evidence" value="ECO:0007669"/>
    <property type="project" value="UniProtKB-KW"/>
</dbReference>
<dbReference type="GO" id="GO:0071555">
    <property type="term" value="P:cell wall organization"/>
    <property type="evidence" value="ECO:0007669"/>
    <property type="project" value="UniProtKB-KW"/>
</dbReference>
<dbReference type="GO" id="GO:0009252">
    <property type="term" value="P:peptidoglycan biosynthetic process"/>
    <property type="evidence" value="ECO:0007669"/>
    <property type="project" value="UniProtKB-UniRule"/>
</dbReference>
<dbReference type="GO" id="GO:0008360">
    <property type="term" value="P:regulation of cell shape"/>
    <property type="evidence" value="ECO:0007669"/>
    <property type="project" value="UniProtKB-KW"/>
</dbReference>
<dbReference type="Gene3D" id="3.40.50.20">
    <property type="match status" value="1"/>
</dbReference>
<dbReference type="Gene3D" id="3.30.1490.20">
    <property type="entry name" value="ATP-grasp fold, A domain"/>
    <property type="match status" value="1"/>
</dbReference>
<dbReference type="Gene3D" id="3.30.470.20">
    <property type="entry name" value="ATP-grasp fold, B domain"/>
    <property type="match status" value="1"/>
</dbReference>
<dbReference type="HAMAP" id="MF_00047">
    <property type="entry name" value="Dala_Dala_lig"/>
    <property type="match status" value="1"/>
</dbReference>
<dbReference type="InterPro" id="IPR011761">
    <property type="entry name" value="ATP-grasp"/>
</dbReference>
<dbReference type="InterPro" id="IPR013815">
    <property type="entry name" value="ATP_grasp_subdomain_1"/>
</dbReference>
<dbReference type="InterPro" id="IPR000291">
    <property type="entry name" value="D-Ala_lig_Van_CS"/>
</dbReference>
<dbReference type="InterPro" id="IPR005905">
    <property type="entry name" value="D_ala_D_ala"/>
</dbReference>
<dbReference type="InterPro" id="IPR011095">
    <property type="entry name" value="Dala_Dala_lig_C"/>
</dbReference>
<dbReference type="InterPro" id="IPR011127">
    <property type="entry name" value="Dala_Dala_lig_N"/>
</dbReference>
<dbReference type="InterPro" id="IPR016185">
    <property type="entry name" value="PreATP-grasp_dom_sf"/>
</dbReference>
<dbReference type="NCBIfam" id="TIGR01205">
    <property type="entry name" value="D_ala_D_alaTIGR"/>
    <property type="match status" value="1"/>
</dbReference>
<dbReference type="NCBIfam" id="NF002378">
    <property type="entry name" value="PRK01372.1"/>
    <property type="match status" value="1"/>
</dbReference>
<dbReference type="PANTHER" id="PTHR23132">
    <property type="entry name" value="D-ALANINE--D-ALANINE LIGASE"/>
    <property type="match status" value="1"/>
</dbReference>
<dbReference type="PANTHER" id="PTHR23132:SF23">
    <property type="entry name" value="D-ALANINE--D-ALANINE LIGASE B"/>
    <property type="match status" value="1"/>
</dbReference>
<dbReference type="Pfam" id="PF07478">
    <property type="entry name" value="Dala_Dala_lig_C"/>
    <property type="match status" value="1"/>
</dbReference>
<dbReference type="Pfam" id="PF01820">
    <property type="entry name" value="Dala_Dala_lig_N"/>
    <property type="match status" value="1"/>
</dbReference>
<dbReference type="PIRSF" id="PIRSF039102">
    <property type="entry name" value="Ddl/VanB"/>
    <property type="match status" value="1"/>
</dbReference>
<dbReference type="SUPFAM" id="SSF56059">
    <property type="entry name" value="Glutathione synthetase ATP-binding domain-like"/>
    <property type="match status" value="1"/>
</dbReference>
<dbReference type="SUPFAM" id="SSF52440">
    <property type="entry name" value="PreATP-grasp domain"/>
    <property type="match status" value="1"/>
</dbReference>
<dbReference type="PROSITE" id="PS50975">
    <property type="entry name" value="ATP_GRASP"/>
    <property type="match status" value="1"/>
</dbReference>
<dbReference type="PROSITE" id="PS00843">
    <property type="entry name" value="DALA_DALA_LIGASE_1"/>
    <property type="match status" value="1"/>
</dbReference>
<dbReference type="PROSITE" id="PS00844">
    <property type="entry name" value="DALA_DALA_LIGASE_2"/>
    <property type="match status" value="1"/>
</dbReference>
<organism>
    <name type="scientific">Alcanivorax borkumensis (strain ATCC 700651 / DSM 11573 / NCIMB 13689 / SK2)</name>
    <dbReference type="NCBI Taxonomy" id="393595"/>
    <lineage>
        <taxon>Bacteria</taxon>
        <taxon>Pseudomonadati</taxon>
        <taxon>Pseudomonadota</taxon>
        <taxon>Gammaproteobacteria</taxon>
        <taxon>Oceanospirillales</taxon>
        <taxon>Alcanivoracaceae</taxon>
        <taxon>Alcanivorax</taxon>
    </lineage>
</organism>
<keyword id="KW-0067">ATP-binding</keyword>
<keyword id="KW-0133">Cell shape</keyword>
<keyword id="KW-0961">Cell wall biogenesis/degradation</keyword>
<keyword id="KW-0963">Cytoplasm</keyword>
<keyword id="KW-0436">Ligase</keyword>
<keyword id="KW-0460">Magnesium</keyword>
<keyword id="KW-0464">Manganese</keyword>
<keyword id="KW-0479">Metal-binding</keyword>
<keyword id="KW-0547">Nucleotide-binding</keyword>
<keyword id="KW-0573">Peptidoglycan synthesis</keyword>
<keyword id="KW-1185">Reference proteome</keyword>
<reference key="1">
    <citation type="journal article" date="2006" name="Nat. Biotechnol.">
        <title>Genome sequence of the ubiquitous hydrocarbon-degrading marine bacterium Alcanivorax borkumensis.</title>
        <authorList>
            <person name="Schneiker S."/>
            <person name="Martins dos Santos V.A.P."/>
            <person name="Bartels D."/>
            <person name="Bekel T."/>
            <person name="Brecht M."/>
            <person name="Buhrmester J."/>
            <person name="Chernikova T.N."/>
            <person name="Denaro R."/>
            <person name="Ferrer M."/>
            <person name="Gertler C."/>
            <person name="Goesmann A."/>
            <person name="Golyshina O.V."/>
            <person name="Kaminski F."/>
            <person name="Khachane A.N."/>
            <person name="Lang S."/>
            <person name="Linke B."/>
            <person name="McHardy A.C."/>
            <person name="Meyer F."/>
            <person name="Nechitaylo T."/>
            <person name="Puehler A."/>
            <person name="Regenhardt D."/>
            <person name="Rupp O."/>
            <person name="Sabirova J.S."/>
            <person name="Selbitschka W."/>
            <person name="Yakimov M.M."/>
            <person name="Timmis K.N."/>
            <person name="Vorhoelter F.-J."/>
            <person name="Weidner S."/>
            <person name="Kaiser O."/>
            <person name="Golyshin P.N."/>
        </authorList>
    </citation>
    <scope>NUCLEOTIDE SEQUENCE [LARGE SCALE GENOMIC DNA]</scope>
    <source>
        <strain>ATCC 700651 / DSM 11573 / NCIMB 13689 / SK2</strain>
    </source>
</reference>
<proteinExistence type="inferred from homology"/>
<gene>
    <name evidence="2" type="primary">ddl</name>
    <name type="ordered locus">ABO_0600</name>
</gene>
<evidence type="ECO:0000250" key="1"/>
<evidence type="ECO:0000255" key="2">
    <source>
        <dbReference type="HAMAP-Rule" id="MF_00047"/>
    </source>
</evidence>
<comment type="function">
    <text evidence="2">Cell wall formation.</text>
</comment>
<comment type="catalytic activity">
    <reaction evidence="2">
        <text>2 D-alanine + ATP = D-alanyl-D-alanine + ADP + phosphate + H(+)</text>
        <dbReference type="Rhea" id="RHEA:11224"/>
        <dbReference type="ChEBI" id="CHEBI:15378"/>
        <dbReference type="ChEBI" id="CHEBI:30616"/>
        <dbReference type="ChEBI" id="CHEBI:43474"/>
        <dbReference type="ChEBI" id="CHEBI:57416"/>
        <dbReference type="ChEBI" id="CHEBI:57822"/>
        <dbReference type="ChEBI" id="CHEBI:456216"/>
        <dbReference type="EC" id="6.3.2.4"/>
    </reaction>
</comment>
<comment type="cofactor">
    <cofactor evidence="1">
        <name>Mg(2+)</name>
        <dbReference type="ChEBI" id="CHEBI:18420"/>
    </cofactor>
    <cofactor evidence="1">
        <name>Mn(2+)</name>
        <dbReference type="ChEBI" id="CHEBI:29035"/>
    </cofactor>
    <text evidence="1">Binds 2 magnesium or manganese ions per subunit.</text>
</comment>
<comment type="pathway">
    <text evidence="2">Cell wall biogenesis; peptidoglycan biosynthesis.</text>
</comment>
<comment type="subcellular location">
    <subcellularLocation>
        <location evidence="2">Cytoplasm</location>
    </subcellularLocation>
</comment>
<comment type="similarity">
    <text evidence="2">Belongs to the D-alanine--D-alanine ligase family.</text>
</comment>
<sequence length="307" mass="32851">MDKRALKERLSRVGRVAVLAGGRSAERAVSLKSGAAVHAGLRNLGLLAELVDPADKSVDTLRGFDAAFIALHGRGGEDGVIQGVLEHLEIPYTGSGVMASAIGMDKVRTKQLWKGAGLPTPAFYVAGREEAELGFPVIVKPAHEGSSIGMAKADNTEELGEALVAAEKFDQDVLVEAWVNGPEYTVAVLGDEALPAIRLQTPHVFYDFEAKYQSDSTEYLCPAGLDDADEQALRTLALTAFRVAGCRGWGRVDVMRDEQGQWQLLEVNTVPGMTDHSLVPMAAKATGRDFDVLVGEILLDALERGRG</sequence>
<feature type="chain" id="PRO_0000341048" description="D-alanine--D-alanine ligase">
    <location>
        <begin position="1"/>
        <end position="307"/>
    </location>
</feature>
<feature type="domain" description="ATP-grasp" evidence="2">
    <location>
        <begin position="110"/>
        <end position="299"/>
    </location>
</feature>
<feature type="binding site" evidence="2">
    <location>
        <begin position="136"/>
        <end position="185"/>
    </location>
    <ligand>
        <name>ATP</name>
        <dbReference type="ChEBI" id="CHEBI:30616"/>
    </ligand>
</feature>
<feature type="binding site" evidence="2">
    <location>
        <position position="253"/>
    </location>
    <ligand>
        <name>Mg(2+)</name>
        <dbReference type="ChEBI" id="CHEBI:18420"/>
        <label>1</label>
    </ligand>
</feature>
<feature type="binding site" evidence="2">
    <location>
        <position position="266"/>
    </location>
    <ligand>
        <name>Mg(2+)</name>
        <dbReference type="ChEBI" id="CHEBI:18420"/>
        <label>1</label>
    </ligand>
</feature>
<feature type="binding site" evidence="2">
    <location>
        <position position="266"/>
    </location>
    <ligand>
        <name>Mg(2+)</name>
        <dbReference type="ChEBI" id="CHEBI:18420"/>
        <label>2</label>
    </ligand>
</feature>
<feature type="binding site" evidence="2">
    <location>
        <position position="268"/>
    </location>
    <ligand>
        <name>Mg(2+)</name>
        <dbReference type="ChEBI" id="CHEBI:18420"/>
        <label>2</label>
    </ligand>
</feature>
<name>DDL_ALCBS</name>
<protein>
    <recommendedName>
        <fullName evidence="2">D-alanine--D-alanine ligase</fullName>
        <ecNumber evidence="2">6.3.2.4</ecNumber>
    </recommendedName>
    <alternativeName>
        <fullName evidence="2">D-Ala-D-Ala ligase</fullName>
    </alternativeName>
    <alternativeName>
        <fullName evidence="2">D-alanylalanine synthetase</fullName>
    </alternativeName>
</protein>